<sequence length="225" mass="24117">MSLPEPLLRADWPRERLLRHGAATLSDPELLALALRTGVAGCNAVQLGHDLLRRFGGLRGLLGTSPAELQVVPGLGTAKACVLAAVLELARRTLEEDLVRQDALANPDLVRRYCQAALGHRKVEHCIALYLDARLKLIICAEVARGTLTQAQIYPREIVREALRHHAAALILAHNHPGGTAAASAADIAMTRQIRQALALIDVRLIDHVIVAGAATVSMAAQGHL</sequence>
<proteinExistence type="inferred from homology"/>
<keyword id="KW-0378">Hydrolase</keyword>
<keyword id="KW-0479">Metal-binding</keyword>
<keyword id="KW-0482">Metalloprotease</keyword>
<keyword id="KW-0645">Protease</keyword>
<keyword id="KW-0862">Zinc</keyword>
<organism>
    <name type="scientific">Bordetella bronchiseptica (strain ATCC BAA-588 / NCTC 13252 / RB50)</name>
    <name type="common">Alcaligenes bronchisepticus</name>
    <dbReference type="NCBI Taxonomy" id="257310"/>
    <lineage>
        <taxon>Bacteria</taxon>
        <taxon>Pseudomonadati</taxon>
        <taxon>Pseudomonadota</taxon>
        <taxon>Betaproteobacteria</taxon>
        <taxon>Burkholderiales</taxon>
        <taxon>Alcaligenaceae</taxon>
        <taxon>Bordetella</taxon>
    </lineage>
</organism>
<comment type="similarity">
    <text evidence="2">Belongs to the UPF0758 family.</text>
</comment>
<feature type="chain" id="PRO_0000190684" description="UPF0758 protein BB3258">
    <location>
        <begin position="1"/>
        <end position="225"/>
    </location>
</feature>
<feature type="domain" description="MPN" evidence="1">
    <location>
        <begin position="103"/>
        <end position="225"/>
    </location>
</feature>
<feature type="short sequence motif" description="JAMM motif" evidence="1">
    <location>
        <begin position="174"/>
        <end position="187"/>
    </location>
</feature>
<feature type="binding site" evidence="1">
    <location>
        <position position="174"/>
    </location>
    <ligand>
        <name>Zn(2+)</name>
        <dbReference type="ChEBI" id="CHEBI:29105"/>
        <note>catalytic</note>
    </ligand>
</feature>
<feature type="binding site" evidence="1">
    <location>
        <position position="176"/>
    </location>
    <ligand>
        <name>Zn(2+)</name>
        <dbReference type="ChEBI" id="CHEBI:29105"/>
        <note>catalytic</note>
    </ligand>
</feature>
<feature type="binding site" evidence="1">
    <location>
        <position position="187"/>
    </location>
    <ligand>
        <name>Zn(2+)</name>
        <dbReference type="ChEBI" id="CHEBI:29105"/>
        <note>catalytic</note>
    </ligand>
</feature>
<name>Y3258_BORBR</name>
<reference key="1">
    <citation type="journal article" date="2003" name="Nat. Genet.">
        <title>Comparative analysis of the genome sequences of Bordetella pertussis, Bordetella parapertussis and Bordetella bronchiseptica.</title>
        <authorList>
            <person name="Parkhill J."/>
            <person name="Sebaihia M."/>
            <person name="Preston A."/>
            <person name="Murphy L.D."/>
            <person name="Thomson N.R."/>
            <person name="Harris D.E."/>
            <person name="Holden M.T.G."/>
            <person name="Churcher C.M."/>
            <person name="Bentley S.D."/>
            <person name="Mungall K.L."/>
            <person name="Cerdeno-Tarraga A.-M."/>
            <person name="Temple L."/>
            <person name="James K.D."/>
            <person name="Harris B."/>
            <person name="Quail M.A."/>
            <person name="Achtman M."/>
            <person name="Atkin R."/>
            <person name="Baker S."/>
            <person name="Basham D."/>
            <person name="Bason N."/>
            <person name="Cherevach I."/>
            <person name="Chillingworth T."/>
            <person name="Collins M."/>
            <person name="Cronin A."/>
            <person name="Davis P."/>
            <person name="Doggett J."/>
            <person name="Feltwell T."/>
            <person name="Goble A."/>
            <person name="Hamlin N."/>
            <person name="Hauser H."/>
            <person name="Holroyd S."/>
            <person name="Jagels K."/>
            <person name="Leather S."/>
            <person name="Moule S."/>
            <person name="Norberczak H."/>
            <person name="O'Neil S."/>
            <person name="Ormond D."/>
            <person name="Price C."/>
            <person name="Rabbinowitsch E."/>
            <person name="Rutter S."/>
            <person name="Sanders M."/>
            <person name="Saunders D."/>
            <person name="Seeger K."/>
            <person name="Sharp S."/>
            <person name="Simmonds M."/>
            <person name="Skelton J."/>
            <person name="Squares R."/>
            <person name="Squares S."/>
            <person name="Stevens K."/>
            <person name="Unwin L."/>
            <person name="Whitehead S."/>
            <person name="Barrell B.G."/>
            <person name="Maskell D.J."/>
        </authorList>
    </citation>
    <scope>NUCLEOTIDE SEQUENCE [LARGE SCALE GENOMIC DNA]</scope>
    <source>
        <strain>ATCC BAA-588 / NCTC 13252 / RB50</strain>
    </source>
</reference>
<evidence type="ECO:0000255" key="1">
    <source>
        <dbReference type="PROSITE-ProRule" id="PRU01182"/>
    </source>
</evidence>
<evidence type="ECO:0000305" key="2"/>
<gene>
    <name type="ordered locus">BB3258</name>
</gene>
<dbReference type="EMBL" id="BX640447">
    <property type="protein sequence ID" value="CAE33750.1"/>
    <property type="molecule type" value="Genomic_DNA"/>
</dbReference>
<dbReference type="SMR" id="Q7WHF0"/>
<dbReference type="KEGG" id="bbr:BB3258"/>
<dbReference type="eggNOG" id="COG2003">
    <property type="taxonomic scope" value="Bacteria"/>
</dbReference>
<dbReference type="HOGENOM" id="CLU_073529_0_1_4"/>
<dbReference type="Proteomes" id="UP000001027">
    <property type="component" value="Chromosome"/>
</dbReference>
<dbReference type="GO" id="GO:0046872">
    <property type="term" value="F:metal ion binding"/>
    <property type="evidence" value="ECO:0007669"/>
    <property type="project" value="UniProtKB-KW"/>
</dbReference>
<dbReference type="GO" id="GO:0008237">
    <property type="term" value="F:metallopeptidase activity"/>
    <property type="evidence" value="ECO:0007669"/>
    <property type="project" value="UniProtKB-KW"/>
</dbReference>
<dbReference type="GO" id="GO:0006508">
    <property type="term" value="P:proteolysis"/>
    <property type="evidence" value="ECO:0007669"/>
    <property type="project" value="UniProtKB-KW"/>
</dbReference>
<dbReference type="CDD" id="cd08071">
    <property type="entry name" value="MPN_DUF2466"/>
    <property type="match status" value="1"/>
</dbReference>
<dbReference type="Gene3D" id="3.40.140.10">
    <property type="entry name" value="Cytidine Deaminase, domain 2"/>
    <property type="match status" value="1"/>
</dbReference>
<dbReference type="InterPro" id="IPR037518">
    <property type="entry name" value="MPN"/>
</dbReference>
<dbReference type="InterPro" id="IPR025657">
    <property type="entry name" value="RadC_JAB"/>
</dbReference>
<dbReference type="InterPro" id="IPR010994">
    <property type="entry name" value="RuvA_2-like"/>
</dbReference>
<dbReference type="InterPro" id="IPR001405">
    <property type="entry name" value="UPF0758"/>
</dbReference>
<dbReference type="InterPro" id="IPR046778">
    <property type="entry name" value="UPF0758_N"/>
</dbReference>
<dbReference type="NCBIfam" id="NF000642">
    <property type="entry name" value="PRK00024.1"/>
    <property type="match status" value="1"/>
</dbReference>
<dbReference type="NCBIfam" id="TIGR00608">
    <property type="entry name" value="radc"/>
    <property type="match status" value="1"/>
</dbReference>
<dbReference type="PANTHER" id="PTHR30471">
    <property type="entry name" value="DNA REPAIR PROTEIN RADC"/>
    <property type="match status" value="1"/>
</dbReference>
<dbReference type="PANTHER" id="PTHR30471:SF3">
    <property type="entry name" value="UPF0758 PROTEIN YEES-RELATED"/>
    <property type="match status" value="1"/>
</dbReference>
<dbReference type="Pfam" id="PF04002">
    <property type="entry name" value="RadC"/>
    <property type="match status" value="1"/>
</dbReference>
<dbReference type="Pfam" id="PF20582">
    <property type="entry name" value="UPF0758_N"/>
    <property type="match status" value="1"/>
</dbReference>
<dbReference type="SUPFAM" id="SSF47781">
    <property type="entry name" value="RuvA domain 2-like"/>
    <property type="match status" value="1"/>
</dbReference>
<dbReference type="PROSITE" id="PS50249">
    <property type="entry name" value="MPN"/>
    <property type="match status" value="1"/>
</dbReference>
<accession>Q7WHF0</accession>
<protein>
    <recommendedName>
        <fullName>UPF0758 protein BB3258</fullName>
    </recommendedName>
</protein>